<keyword id="KW-0175">Coiled coil</keyword>
<keyword id="KW-1185">Reference proteome</keyword>
<gene>
    <name type="ordered locus">aq_1072</name>
</gene>
<name>Y1072_AQUAE</name>
<accession>O67167</accession>
<sequence length="144" mass="17361">MMTQKKPIRDLIESCITKVEEHYKLKELYQRLNQGINVEEVLKETVEDYKEKMEKYILEVLEEIEKYCEYRESLHGDQKKEAEEELCECEKDLYCTIAELFELYHFFRELENLSKEQINEAVSIPVEIIYNVVLKLKGIEEKNQ</sequence>
<dbReference type="EMBL" id="AE000657">
    <property type="protein sequence ID" value="AAC07131.1"/>
    <property type="molecule type" value="Genomic_DNA"/>
</dbReference>
<dbReference type="PIR" id="D70392">
    <property type="entry name" value="D70392"/>
</dbReference>
<dbReference type="RefSeq" id="NP_213730.1">
    <property type="nucleotide sequence ID" value="NC_000918.1"/>
</dbReference>
<dbReference type="SMR" id="O67167"/>
<dbReference type="STRING" id="224324.aq_1072"/>
<dbReference type="EnsemblBacteria" id="AAC07131">
    <property type="protein sequence ID" value="AAC07131"/>
    <property type="gene ID" value="aq_1072"/>
</dbReference>
<dbReference type="KEGG" id="aae:aq_1072"/>
<dbReference type="HOGENOM" id="CLU_1792467_0_0_0"/>
<dbReference type="InParanoid" id="O67167"/>
<dbReference type="OrthoDB" id="9834744at2"/>
<dbReference type="Proteomes" id="UP000000798">
    <property type="component" value="Chromosome"/>
</dbReference>
<organism>
    <name type="scientific">Aquifex aeolicus (strain VF5)</name>
    <dbReference type="NCBI Taxonomy" id="224324"/>
    <lineage>
        <taxon>Bacteria</taxon>
        <taxon>Pseudomonadati</taxon>
        <taxon>Aquificota</taxon>
        <taxon>Aquificia</taxon>
        <taxon>Aquificales</taxon>
        <taxon>Aquificaceae</taxon>
        <taxon>Aquifex</taxon>
    </lineage>
</organism>
<feature type="chain" id="PRO_0000186897" description="Uncharacterized protein aq_1072">
    <location>
        <begin position="1"/>
        <end position="144"/>
    </location>
</feature>
<feature type="coiled-coil region" evidence="1">
    <location>
        <begin position="24"/>
        <end position="67"/>
    </location>
</feature>
<proteinExistence type="predicted"/>
<evidence type="ECO:0000255" key="1"/>
<protein>
    <recommendedName>
        <fullName>Uncharacterized protein aq_1072</fullName>
    </recommendedName>
</protein>
<reference key="1">
    <citation type="journal article" date="1998" name="Nature">
        <title>The complete genome of the hyperthermophilic bacterium Aquifex aeolicus.</title>
        <authorList>
            <person name="Deckert G."/>
            <person name="Warren P.V."/>
            <person name="Gaasterland T."/>
            <person name="Young W.G."/>
            <person name="Lenox A.L."/>
            <person name="Graham D.E."/>
            <person name="Overbeek R."/>
            <person name="Snead M.A."/>
            <person name="Keller M."/>
            <person name="Aujay M."/>
            <person name="Huber R."/>
            <person name="Feldman R.A."/>
            <person name="Short J.M."/>
            <person name="Olsen G.J."/>
            <person name="Swanson R.V."/>
        </authorList>
    </citation>
    <scope>NUCLEOTIDE SEQUENCE [LARGE SCALE GENOMIC DNA]</scope>
    <source>
        <strain>VF5</strain>
    </source>
</reference>